<evidence type="ECO:0000250" key="1"/>
<evidence type="ECO:0000255" key="2"/>
<evidence type="ECO:0000305" key="3"/>
<gene>
    <name type="primary">ndhF</name>
</gene>
<reference key="1">
    <citation type="journal article" date="1995" name="Proc. Natl. Acad. Sci. U.S.A.">
        <title>ndhF sequence evolution and the major clades in the sunflower family.</title>
        <authorList>
            <person name="Kim K.-J."/>
            <person name="Jansen R.K."/>
        </authorList>
    </citation>
    <scope>NUCLEOTIDE SEQUENCE [GENOMIC DNA]</scope>
</reference>
<keyword id="KW-0150">Chloroplast</keyword>
<keyword id="KW-0472">Membrane</keyword>
<keyword id="KW-0520">NAD</keyword>
<keyword id="KW-0521">NADP</keyword>
<keyword id="KW-0934">Plastid</keyword>
<keyword id="KW-0618">Plastoquinone</keyword>
<keyword id="KW-0874">Quinone</keyword>
<keyword id="KW-0793">Thylakoid</keyword>
<keyword id="KW-1278">Translocase</keyword>
<keyword id="KW-0812">Transmembrane</keyword>
<keyword id="KW-1133">Transmembrane helix</keyword>
<keyword id="KW-0813">Transport</keyword>
<comment type="function">
    <text evidence="1">NDH shuttles electrons from NAD(P)H:plastoquinone, via FMN and iron-sulfur (Fe-S) centers, to quinones in the photosynthetic chain and possibly in a chloroplast respiratory chain. The immediate electron acceptor for the enzyme in this species is believed to be plastoquinone. Couples the redox reaction to proton translocation, and thus conserves the redox energy in a proton gradient (By similarity).</text>
</comment>
<comment type="catalytic activity">
    <reaction>
        <text>a plastoquinone + NADH + (n+1) H(+)(in) = a plastoquinol + NAD(+) + n H(+)(out)</text>
        <dbReference type="Rhea" id="RHEA:42608"/>
        <dbReference type="Rhea" id="RHEA-COMP:9561"/>
        <dbReference type="Rhea" id="RHEA-COMP:9562"/>
        <dbReference type="ChEBI" id="CHEBI:15378"/>
        <dbReference type="ChEBI" id="CHEBI:17757"/>
        <dbReference type="ChEBI" id="CHEBI:57540"/>
        <dbReference type="ChEBI" id="CHEBI:57945"/>
        <dbReference type="ChEBI" id="CHEBI:62192"/>
    </reaction>
</comment>
<comment type="catalytic activity">
    <reaction>
        <text>a plastoquinone + NADPH + (n+1) H(+)(in) = a plastoquinol + NADP(+) + n H(+)(out)</text>
        <dbReference type="Rhea" id="RHEA:42612"/>
        <dbReference type="Rhea" id="RHEA-COMP:9561"/>
        <dbReference type="Rhea" id="RHEA-COMP:9562"/>
        <dbReference type="ChEBI" id="CHEBI:15378"/>
        <dbReference type="ChEBI" id="CHEBI:17757"/>
        <dbReference type="ChEBI" id="CHEBI:57783"/>
        <dbReference type="ChEBI" id="CHEBI:58349"/>
        <dbReference type="ChEBI" id="CHEBI:62192"/>
    </reaction>
</comment>
<comment type="subunit">
    <text evidence="1">NDH is composed of at least 16 different subunits, 5 of which are encoded in the nucleus.</text>
</comment>
<comment type="subcellular location">
    <subcellularLocation>
        <location evidence="1">Plastid</location>
        <location evidence="1">Chloroplast thylakoid membrane</location>
        <topology evidence="1">Multi-pass membrane protein</topology>
    </subcellularLocation>
</comment>
<comment type="similarity">
    <text evidence="3">Belongs to the complex I subunit 5 family.</text>
</comment>
<organism>
    <name type="scientific">Pentatrichia integra</name>
    <name type="common">Rock-climbing daisy</name>
    <name type="synonym">Anisothrix integra</name>
    <dbReference type="NCBI Taxonomy" id="41474"/>
    <lineage>
        <taxon>Eukaryota</taxon>
        <taxon>Viridiplantae</taxon>
        <taxon>Streptophyta</taxon>
        <taxon>Embryophyta</taxon>
        <taxon>Tracheophyta</taxon>
        <taxon>Spermatophyta</taxon>
        <taxon>Magnoliopsida</taxon>
        <taxon>eudicotyledons</taxon>
        <taxon>Gunneridae</taxon>
        <taxon>Pentapetalae</taxon>
        <taxon>asterids</taxon>
        <taxon>campanulids</taxon>
        <taxon>Asterales</taxon>
        <taxon>Asteraceae</taxon>
        <taxon>Asteroideae</taxon>
        <taxon>Gnaphalieae</taxon>
        <taxon>Pentatrichia</taxon>
    </lineage>
</organism>
<protein>
    <recommendedName>
        <fullName>NAD(P)H-quinone oxidoreductase subunit 5, chloroplastic</fullName>
        <ecNumber>7.1.1.-</ecNumber>
    </recommendedName>
    <alternativeName>
        <fullName>NAD(P)H dehydrogenase subunit 5</fullName>
    </alternativeName>
    <alternativeName>
        <fullName>NADH-plastoquinone oxidoreductase subunit 5</fullName>
    </alternativeName>
</protein>
<dbReference type="EC" id="7.1.1.-"/>
<dbReference type="EMBL" id="L39437">
    <property type="protein sequence ID" value="AAC37728.1"/>
    <property type="molecule type" value="Genomic_DNA"/>
</dbReference>
<dbReference type="PIR" id="T12620">
    <property type="entry name" value="T12620"/>
</dbReference>
<dbReference type="SMR" id="P51096"/>
<dbReference type="GO" id="GO:0009535">
    <property type="term" value="C:chloroplast thylakoid membrane"/>
    <property type="evidence" value="ECO:0007669"/>
    <property type="project" value="UniProtKB-SubCell"/>
</dbReference>
<dbReference type="GO" id="GO:0008137">
    <property type="term" value="F:NADH dehydrogenase (ubiquinone) activity"/>
    <property type="evidence" value="ECO:0007669"/>
    <property type="project" value="InterPro"/>
</dbReference>
<dbReference type="GO" id="GO:0048038">
    <property type="term" value="F:quinone binding"/>
    <property type="evidence" value="ECO:0007669"/>
    <property type="project" value="UniProtKB-KW"/>
</dbReference>
<dbReference type="GO" id="GO:0042773">
    <property type="term" value="P:ATP synthesis coupled electron transport"/>
    <property type="evidence" value="ECO:0007669"/>
    <property type="project" value="InterPro"/>
</dbReference>
<dbReference type="GO" id="GO:0015990">
    <property type="term" value="P:electron transport coupled proton transport"/>
    <property type="evidence" value="ECO:0007669"/>
    <property type="project" value="TreeGrafter"/>
</dbReference>
<dbReference type="Gene3D" id="1.20.5.2700">
    <property type="match status" value="1"/>
</dbReference>
<dbReference type="InterPro" id="IPR002128">
    <property type="entry name" value="NADH_UbQ_OxRdtase_chlpt_su5_C"/>
</dbReference>
<dbReference type="InterPro" id="IPR018393">
    <property type="entry name" value="NADHpl_OxRdtase_5_subgr"/>
</dbReference>
<dbReference type="InterPro" id="IPR001750">
    <property type="entry name" value="ND/Mrp_TM"/>
</dbReference>
<dbReference type="InterPro" id="IPR003945">
    <property type="entry name" value="NU5C-like"/>
</dbReference>
<dbReference type="InterPro" id="IPR001516">
    <property type="entry name" value="Proton_antipo_N"/>
</dbReference>
<dbReference type="NCBIfam" id="TIGR01974">
    <property type="entry name" value="NDH_I_L"/>
    <property type="match status" value="1"/>
</dbReference>
<dbReference type="NCBIfam" id="NF005141">
    <property type="entry name" value="PRK06590.1"/>
    <property type="match status" value="1"/>
</dbReference>
<dbReference type="PANTHER" id="PTHR42829">
    <property type="entry name" value="NADH-UBIQUINONE OXIDOREDUCTASE CHAIN 5"/>
    <property type="match status" value="1"/>
</dbReference>
<dbReference type="PANTHER" id="PTHR42829:SF2">
    <property type="entry name" value="NADH-UBIQUINONE OXIDOREDUCTASE CHAIN 5"/>
    <property type="match status" value="1"/>
</dbReference>
<dbReference type="Pfam" id="PF01010">
    <property type="entry name" value="Proton_antipo_C"/>
    <property type="match status" value="1"/>
</dbReference>
<dbReference type="Pfam" id="PF00361">
    <property type="entry name" value="Proton_antipo_M"/>
    <property type="match status" value="1"/>
</dbReference>
<dbReference type="Pfam" id="PF00662">
    <property type="entry name" value="Proton_antipo_N"/>
    <property type="match status" value="1"/>
</dbReference>
<dbReference type="PRINTS" id="PR01434">
    <property type="entry name" value="NADHDHGNASE5"/>
</dbReference>
<dbReference type="PRINTS" id="PR01435">
    <property type="entry name" value="NPOXDRDTASE5"/>
</dbReference>
<geneLocation type="chloroplast"/>
<accession>P51096</accession>
<feature type="chain" id="PRO_0000118167" description="NAD(P)H-quinone oxidoreductase subunit 5, chloroplastic">
    <location>
        <begin position="1"/>
        <end position="741"/>
    </location>
</feature>
<feature type="transmembrane region" description="Helical" evidence="2">
    <location>
        <begin position="9"/>
        <end position="29"/>
    </location>
</feature>
<feature type="transmembrane region" description="Helical" evidence="2">
    <location>
        <begin position="40"/>
        <end position="60"/>
    </location>
</feature>
<feature type="transmembrane region" description="Helical" evidence="2">
    <location>
        <begin position="89"/>
        <end position="109"/>
    </location>
</feature>
<feature type="transmembrane region" description="Helical" evidence="2">
    <location>
        <begin position="125"/>
        <end position="145"/>
    </location>
</feature>
<feature type="transmembrane region" description="Helical" evidence="2">
    <location>
        <begin position="147"/>
        <end position="167"/>
    </location>
</feature>
<feature type="transmembrane region" description="Helical" evidence="2">
    <location>
        <begin position="185"/>
        <end position="205"/>
    </location>
</feature>
<feature type="transmembrane region" description="Helical" evidence="2">
    <location>
        <begin position="219"/>
        <end position="239"/>
    </location>
</feature>
<feature type="transmembrane region" description="Helical" evidence="2">
    <location>
        <begin position="258"/>
        <end position="278"/>
    </location>
</feature>
<feature type="transmembrane region" description="Helical" evidence="2">
    <location>
        <begin position="283"/>
        <end position="303"/>
    </location>
</feature>
<feature type="transmembrane region" description="Helical" evidence="2">
    <location>
        <begin position="327"/>
        <end position="347"/>
    </location>
</feature>
<feature type="transmembrane region" description="Helical" evidence="2">
    <location>
        <begin position="354"/>
        <end position="374"/>
    </location>
</feature>
<feature type="transmembrane region" description="Helical" evidence="2">
    <location>
        <begin position="396"/>
        <end position="416"/>
    </location>
</feature>
<feature type="transmembrane region" description="Helical" evidence="2">
    <location>
        <begin position="425"/>
        <end position="445"/>
    </location>
</feature>
<feature type="transmembrane region" description="Helical" evidence="2">
    <location>
        <begin position="549"/>
        <end position="569"/>
    </location>
</feature>
<feature type="transmembrane region" description="Helical" evidence="2">
    <location>
        <begin position="605"/>
        <end position="625"/>
    </location>
</feature>
<feature type="transmembrane region" description="Helical" evidence="2">
    <location>
        <begin position="721"/>
        <end position="741"/>
    </location>
</feature>
<name>NU5C_PENIE</name>
<sequence length="741" mass="84250">MEQTYQYAWIIPFLPLPVPMLIGLGLLLFPTATKSLRRMWAFQSVLLLSIVMIFSINLSIQQINSSSVYQYVWSWIINNDFSLEFGYLIDPLTSIMSILITTVGILVLIYSDNYMSHDHGYLRFFAYMSFFSTSMLGLVTSSNLIQIYIFWELVGMCSYLLIGFWFTRPVAAKACQKAFVTNRVGDFGLLLGILGFYWITGSFEFRDLFQIFNNLISNNEVNFFFVTLCAVLLFGGAIAKSAQFPLHVWLPDAMEGPTPISALIRAATMVAAGIFLVARLMPLFIVIPHIMNFISLIGIITVFLGATLALAQKDIKRGLAYSTMSQLGYMMLALGMGSYRSALFHLITHAYSKALLFLGSGSVIHSMETLVGYCPEKSQNMVLMGGLTKHVPITKNSFLLGTLSLCGIPPLACFWSKDEILNDSWLYSPIFATIAWSTAGLTAFYMCRIYLLTFEGHLNVHFQNYSGKMNTPLYSISLWGKEGSKISNKNFPLVTLLKMKKNERTYFFSNKVYKIDENVRNQIQPFLSIPNFGNTKTSLYPYESDNTMLFPILILIIFTLFVGFLGIHFNQDVDILTKWLTPSINLLHKNSNNSIDWYEFSKDAVFSVSIASFGIFIAFFLYKPVYSSFQNLDLINSFVKISPKRIFYDKIKNAIYDWSYNRGYIDAFYGTFLTAGMRKLAEFTHFFDRRIIDGIPNGVGLMSFFVAEVIKSVGGGRISSYLFFYFSYVSIFLLIYYFVNL</sequence>
<proteinExistence type="inferred from homology"/>